<comment type="function">
    <text evidence="1">Catalyzes the transfer of endogenously produced octanoic acid from octanoyl-acyl-carrier-protein onto the lipoyl domains of lipoate-dependent enzymes. Lipoyl-ACP can also act as a substrate although octanoyl-ACP is likely to be the physiological substrate.</text>
</comment>
<comment type="catalytic activity">
    <reaction evidence="1">
        <text>octanoyl-[ACP] + L-lysyl-[protein] = N(6)-octanoyl-L-lysyl-[protein] + holo-[ACP] + H(+)</text>
        <dbReference type="Rhea" id="RHEA:17665"/>
        <dbReference type="Rhea" id="RHEA-COMP:9636"/>
        <dbReference type="Rhea" id="RHEA-COMP:9685"/>
        <dbReference type="Rhea" id="RHEA-COMP:9752"/>
        <dbReference type="Rhea" id="RHEA-COMP:9928"/>
        <dbReference type="ChEBI" id="CHEBI:15378"/>
        <dbReference type="ChEBI" id="CHEBI:29969"/>
        <dbReference type="ChEBI" id="CHEBI:64479"/>
        <dbReference type="ChEBI" id="CHEBI:78463"/>
        <dbReference type="ChEBI" id="CHEBI:78809"/>
        <dbReference type="EC" id="2.3.1.181"/>
    </reaction>
</comment>
<comment type="pathway">
    <text evidence="1">Protein modification; protein lipoylation via endogenous pathway; protein N(6)-(lipoyl)lysine from octanoyl-[acyl-carrier-protein]: step 1/2.</text>
</comment>
<comment type="subcellular location">
    <subcellularLocation>
        <location evidence="1">Cytoplasm</location>
    </subcellularLocation>
</comment>
<comment type="miscellaneous">
    <text evidence="1">In the reaction, the free carboxyl group of octanoic acid is attached via an amide linkage to the epsilon-amino group of a specific lysine residue of lipoyl domains of lipoate-dependent enzymes.</text>
</comment>
<comment type="similarity">
    <text evidence="1">Belongs to the LipB family.</text>
</comment>
<organism>
    <name type="scientific">Burkholderia cenocepacia (strain HI2424)</name>
    <dbReference type="NCBI Taxonomy" id="331272"/>
    <lineage>
        <taxon>Bacteria</taxon>
        <taxon>Pseudomonadati</taxon>
        <taxon>Pseudomonadota</taxon>
        <taxon>Betaproteobacteria</taxon>
        <taxon>Burkholderiales</taxon>
        <taxon>Burkholderiaceae</taxon>
        <taxon>Burkholderia</taxon>
        <taxon>Burkholderia cepacia complex</taxon>
    </lineage>
</organism>
<evidence type="ECO:0000255" key="1">
    <source>
        <dbReference type="HAMAP-Rule" id="MF_00013"/>
    </source>
</evidence>
<evidence type="ECO:0000255" key="2">
    <source>
        <dbReference type="PROSITE-ProRule" id="PRU01067"/>
    </source>
</evidence>
<dbReference type="EC" id="2.3.1.181" evidence="1"/>
<dbReference type="EMBL" id="CP000458">
    <property type="protein sequence ID" value="ABK09636.1"/>
    <property type="molecule type" value="Genomic_DNA"/>
</dbReference>
<dbReference type="RefSeq" id="WP_011694420.1">
    <property type="nucleotide sequence ID" value="NC_008542.1"/>
</dbReference>
<dbReference type="SMR" id="A0KAV9"/>
<dbReference type="KEGG" id="bch:Bcen2424_2888"/>
<dbReference type="HOGENOM" id="CLU_035168_3_1_4"/>
<dbReference type="UniPathway" id="UPA00538">
    <property type="reaction ID" value="UER00592"/>
</dbReference>
<dbReference type="GO" id="GO:0005737">
    <property type="term" value="C:cytoplasm"/>
    <property type="evidence" value="ECO:0007669"/>
    <property type="project" value="UniProtKB-SubCell"/>
</dbReference>
<dbReference type="GO" id="GO:0033819">
    <property type="term" value="F:lipoyl(octanoyl) transferase activity"/>
    <property type="evidence" value="ECO:0007669"/>
    <property type="project" value="UniProtKB-EC"/>
</dbReference>
<dbReference type="GO" id="GO:0036211">
    <property type="term" value="P:protein modification process"/>
    <property type="evidence" value="ECO:0007669"/>
    <property type="project" value="InterPro"/>
</dbReference>
<dbReference type="CDD" id="cd16444">
    <property type="entry name" value="LipB"/>
    <property type="match status" value="1"/>
</dbReference>
<dbReference type="FunFam" id="3.30.930.10:FF:000020">
    <property type="entry name" value="Octanoyltransferase"/>
    <property type="match status" value="1"/>
</dbReference>
<dbReference type="Gene3D" id="3.30.930.10">
    <property type="entry name" value="Bira Bifunctional Protein, Domain 2"/>
    <property type="match status" value="1"/>
</dbReference>
<dbReference type="HAMAP" id="MF_00013">
    <property type="entry name" value="LipB"/>
    <property type="match status" value="1"/>
</dbReference>
<dbReference type="InterPro" id="IPR045864">
    <property type="entry name" value="aa-tRNA-synth_II/BPL/LPL"/>
</dbReference>
<dbReference type="InterPro" id="IPR004143">
    <property type="entry name" value="BPL_LPL_catalytic"/>
</dbReference>
<dbReference type="InterPro" id="IPR000544">
    <property type="entry name" value="Octanoyltransferase"/>
</dbReference>
<dbReference type="InterPro" id="IPR020605">
    <property type="entry name" value="Octanoyltransferase_CS"/>
</dbReference>
<dbReference type="NCBIfam" id="TIGR00214">
    <property type="entry name" value="lipB"/>
    <property type="match status" value="1"/>
</dbReference>
<dbReference type="NCBIfam" id="NF010922">
    <property type="entry name" value="PRK14342.1"/>
    <property type="match status" value="1"/>
</dbReference>
<dbReference type="NCBIfam" id="NF010923">
    <property type="entry name" value="PRK14343.1"/>
    <property type="match status" value="1"/>
</dbReference>
<dbReference type="PANTHER" id="PTHR10993:SF7">
    <property type="entry name" value="LIPOYLTRANSFERASE 2, MITOCHONDRIAL-RELATED"/>
    <property type="match status" value="1"/>
</dbReference>
<dbReference type="PANTHER" id="PTHR10993">
    <property type="entry name" value="OCTANOYLTRANSFERASE"/>
    <property type="match status" value="1"/>
</dbReference>
<dbReference type="Pfam" id="PF21948">
    <property type="entry name" value="LplA-B_cat"/>
    <property type="match status" value="1"/>
</dbReference>
<dbReference type="PIRSF" id="PIRSF016262">
    <property type="entry name" value="LPLase"/>
    <property type="match status" value="1"/>
</dbReference>
<dbReference type="SUPFAM" id="SSF55681">
    <property type="entry name" value="Class II aaRS and biotin synthetases"/>
    <property type="match status" value="1"/>
</dbReference>
<dbReference type="PROSITE" id="PS51733">
    <property type="entry name" value="BPL_LPL_CATALYTIC"/>
    <property type="match status" value="1"/>
</dbReference>
<dbReference type="PROSITE" id="PS01313">
    <property type="entry name" value="LIPB"/>
    <property type="match status" value="1"/>
</dbReference>
<protein>
    <recommendedName>
        <fullName evidence="1">Octanoyltransferase</fullName>
        <ecNumber evidence="1">2.3.1.181</ecNumber>
    </recommendedName>
    <alternativeName>
        <fullName evidence="1">Lipoate-protein ligase B</fullName>
    </alternativeName>
    <alternativeName>
        <fullName evidence="1">Lipoyl/octanoyl transferase</fullName>
    </alternativeName>
    <alternativeName>
        <fullName evidence="1">Octanoyl-[acyl-carrier-protein]-protein N-octanoyltransferase</fullName>
    </alternativeName>
</protein>
<name>LIPB_BURCH</name>
<sequence length="251" mass="26615">MSVSPVSIVSTPVAVSASPAGAPDQPVQPVTVRWRGREAYEASFDAMRAFTDTRTADTGDEIWVVEHPPVYTLGQAGDPAHLLVADSGVPLVKVDRGGQITYHGPGQIVVYLLLDLRRRKLMVRTLVTKIEEAVIETLAAYNLASVRKAGAPGIYVASGVHEGAKIAALGLKIRNGCSYHGLSLNVKMDLRPFLAINPCGYAGLETVDMASLEVAADWNDVAHTLVGRLIANLDGASAAADKPHALEQSND</sequence>
<feature type="chain" id="PRO_1000089443" description="Octanoyltransferase">
    <location>
        <begin position="1"/>
        <end position="251"/>
    </location>
</feature>
<feature type="domain" description="BPL/LPL catalytic" evidence="2">
    <location>
        <begin position="56"/>
        <end position="241"/>
    </location>
</feature>
<feature type="active site" description="Acyl-thioester intermediate" evidence="1">
    <location>
        <position position="199"/>
    </location>
</feature>
<feature type="binding site" evidence="1">
    <location>
        <begin position="96"/>
        <end position="103"/>
    </location>
    <ligand>
        <name>substrate</name>
    </ligand>
</feature>
<feature type="binding site" evidence="1">
    <location>
        <begin position="168"/>
        <end position="170"/>
    </location>
    <ligand>
        <name>substrate</name>
    </ligand>
</feature>
<feature type="binding site" evidence="1">
    <location>
        <begin position="181"/>
        <end position="183"/>
    </location>
    <ligand>
        <name>substrate</name>
    </ligand>
</feature>
<feature type="site" description="Lowers pKa of active site Cys" evidence="1">
    <location>
        <position position="165"/>
    </location>
</feature>
<proteinExistence type="inferred from homology"/>
<accession>A0KAV9</accession>
<gene>
    <name evidence="1" type="primary">lipB</name>
    <name type="ordered locus">Bcen2424_2888</name>
</gene>
<keyword id="KW-0012">Acyltransferase</keyword>
<keyword id="KW-0963">Cytoplasm</keyword>
<keyword id="KW-0808">Transferase</keyword>
<reference key="1">
    <citation type="submission" date="2006-08" db="EMBL/GenBank/DDBJ databases">
        <title>Complete sequence of chromosome 1 of Burkholderia cenocepacia HI2424.</title>
        <authorList>
            <person name="Copeland A."/>
            <person name="Lucas S."/>
            <person name="Lapidus A."/>
            <person name="Barry K."/>
            <person name="Detter J.C."/>
            <person name="Glavina del Rio T."/>
            <person name="Hammon N."/>
            <person name="Israni S."/>
            <person name="Pitluck S."/>
            <person name="Chain P."/>
            <person name="Malfatti S."/>
            <person name="Shin M."/>
            <person name="Vergez L."/>
            <person name="Schmutz J."/>
            <person name="Larimer F."/>
            <person name="Land M."/>
            <person name="Hauser L."/>
            <person name="Kyrpides N."/>
            <person name="Kim E."/>
            <person name="LiPuma J.J."/>
            <person name="Gonzalez C.F."/>
            <person name="Konstantinidis K."/>
            <person name="Tiedje J.M."/>
            <person name="Richardson P."/>
        </authorList>
    </citation>
    <scope>NUCLEOTIDE SEQUENCE [LARGE SCALE GENOMIC DNA]</scope>
    <source>
        <strain>HI2424</strain>
    </source>
</reference>